<proteinExistence type="inferred from homology"/>
<accession>Q9MT47</accession>
<comment type="function">
    <text evidence="1">Usually encoded in the trnK tRNA gene intron. Probably assists in splicing its own and other chloroplast group II introns.</text>
</comment>
<comment type="subcellular location">
    <subcellularLocation>
        <location>Plastid</location>
        <location>Chloroplast</location>
    </subcellularLocation>
</comment>
<comment type="similarity">
    <text evidence="1">Belongs to the intron maturase 2 family. MatK subfamily.</text>
</comment>
<reference key="1">
    <citation type="journal article" date="1997" name="Am. J. Bot.">
        <title>A phylogenetic analysis of the Hamamelidaceae using DNA sequences of nuclear ribosomal ITS and chloroplast gene matK.</title>
        <authorList>
            <person name="Li J.-H."/>
            <person name="Bogle A.L."/>
            <person name="Klein A.S."/>
        </authorList>
    </citation>
    <scope>NUCLEOTIDE SEQUENCE [GENOMIC DNA]</scope>
</reference>
<sequence length="504" mass="59221">MEEFQGYLELDKSRQHDFLYPLIFQEYIYALAHDHGLNRSILLENVGYDNKSSSLIVKRLITRMYQQNHLIISVNDSNQNPFLGHNKNLYSQMISEGFAVIVEIPFSLRSVSSLEGKEIVQSHNLRSIHSIFPFLEDKFLHLNYVSDILIPHPIHLEILVQTLRYWVKDASSLHLLRFFFYEYYNWNSLITPKKSISIFSKRNQRLFLFLYNSHVCEYESIFLFFRNQSSYLRSTSSGALLERIYFYGKIKHLVEVFVNDFQAILWLFKDPFMHYVRYQGKSILASKGTPLLMNKWKYYLVNFWQCHFYVWSQPGRIYINQLSNHSFDFLGYLSSVGLNPSVVRSQMLENSFIIDNAIKKFDIIVPIIPLIGSLAKAKFCNVLGHPISKPARADSSDSDIIDRFVRICRNLSHYHSGSSKKKSLYRIKYILRLSCARTLARKHKSTVRAFLKRLGSGLLEEFLTEEEQVLSLIFPKASSTSRRLYRGRIWYFDIISINDLANYE</sequence>
<dbReference type="EMBL" id="AF013046">
    <property type="protein sequence ID" value="AAF89310.1"/>
    <property type="molecule type" value="Genomic_DNA"/>
</dbReference>
<dbReference type="GO" id="GO:0009507">
    <property type="term" value="C:chloroplast"/>
    <property type="evidence" value="ECO:0007669"/>
    <property type="project" value="UniProtKB-SubCell"/>
</dbReference>
<dbReference type="GO" id="GO:0003723">
    <property type="term" value="F:RNA binding"/>
    <property type="evidence" value="ECO:0007669"/>
    <property type="project" value="UniProtKB-KW"/>
</dbReference>
<dbReference type="GO" id="GO:0006397">
    <property type="term" value="P:mRNA processing"/>
    <property type="evidence" value="ECO:0007669"/>
    <property type="project" value="UniProtKB-KW"/>
</dbReference>
<dbReference type="GO" id="GO:0008380">
    <property type="term" value="P:RNA splicing"/>
    <property type="evidence" value="ECO:0007669"/>
    <property type="project" value="UniProtKB-UniRule"/>
</dbReference>
<dbReference type="GO" id="GO:0008033">
    <property type="term" value="P:tRNA processing"/>
    <property type="evidence" value="ECO:0007669"/>
    <property type="project" value="UniProtKB-KW"/>
</dbReference>
<dbReference type="HAMAP" id="MF_01390">
    <property type="entry name" value="MatK"/>
    <property type="match status" value="1"/>
</dbReference>
<dbReference type="InterPro" id="IPR024937">
    <property type="entry name" value="Domain_X"/>
</dbReference>
<dbReference type="InterPro" id="IPR002866">
    <property type="entry name" value="Maturase_MatK"/>
</dbReference>
<dbReference type="InterPro" id="IPR024942">
    <property type="entry name" value="Maturase_MatK_N"/>
</dbReference>
<dbReference type="PANTHER" id="PTHR34811">
    <property type="entry name" value="MATURASE K"/>
    <property type="match status" value="1"/>
</dbReference>
<dbReference type="PANTHER" id="PTHR34811:SF1">
    <property type="entry name" value="MATURASE K"/>
    <property type="match status" value="1"/>
</dbReference>
<dbReference type="Pfam" id="PF01348">
    <property type="entry name" value="Intron_maturas2"/>
    <property type="match status" value="1"/>
</dbReference>
<dbReference type="Pfam" id="PF01824">
    <property type="entry name" value="MatK_N"/>
    <property type="match status" value="1"/>
</dbReference>
<keyword id="KW-0150">Chloroplast</keyword>
<keyword id="KW-0507">mRNA processing</keyword>
<keyword id="KW-0934">Plastid</keyword>
<keyword id="KW-0694">RNA-binding</keyword>
<keyword id="KW-0819">tRNA processing</keyword>
<protein>
    <recommendedName>
        <fullName evidence="1">Maturase K</fullName>
    </recommendedName>
    <alternativeName>
        <fullName evidence="1">Intron maturase</fullName>
    </alternativeName>
</protein>
<organism>
    <name type="scientific">Hamamelis virginiana</name>
    <name type="common">Witch-hazel</name>
    <name type="synonym">Hamamelis macrophylla</name>
    <dbReference type="NCBI Taxonomy" id="4397"/>
    <lineage>
        <taxon>Eukaryota</taxon>
        <taxon>Viridiplantae</taxon>
        <taxon>Streptophyta</taxon>
        <taxon>Embryophyta</taxon>
        <taxon>Tracheophyta</taxon>
        <taxon>Spermatophyta</taxon>
        <taxon>Magnoliopsida</taxon>
        <taxon>eudicotyledons</taxon>
        <taxon>Gunneridae</taxon>
        <taxon>Pentapetalae</taxon>
        <taxon>Saxifragales</taxon>
        <taxon>Hamamelidaceae</taxon>
        <taxon>Hamamelis</taxon>
    </lineage>
</organism>
<name>MATK_HAMVI</name>
<feature type="chain" id="PRO_0000143415" description="Maturase K">
    <location>
        <begin position="1"/>
        <end position="504"/>
    </location>
</feature>
<gene>
    <name evidence="1" type="primary">matK</name>
</gene>
<evidence type="ECO:0000255" key="1">
    <source>
        <dbReference type="HAMAP-Rule" id="MF_01390"/>
    </source>
</evidence>
<geneLocation type="chloroplast"/>